<protein>
    <recommendedName>
        <fullName>Uncharacterized protein SMU_988</fullName>
    </recommendedName>
</protein>
<accession>P34001</accession>
<proteinExistence type="inferred from homology"/>
<organism>
    <name type="scientific">Streptococcus mutans serotype c (strain ATCC 700610 / UA159)</name>
    <dbReference type="NCBI Taxonomy" id="210007"/>
    <lineage>
        <taxon>Bacteria</taxon>
        <taxon>Bacillati</taxon>
        <taxon>Bacillota</taxon>
        <taxon>Bacilli</taxon>
        <taxon>Lactobacillales</taxon>
        <taxon>Streptococcaceae</taxon>
        <taxon>Streptococcus</taxon>
    </lineage>
</organism>
<sequence length="461" mass="53407">MIGSVLYLVNSQMDTLSIITWLLVILPFPILGTLFLIYTKQDWGYRELKSLIKKSTQAIKPYFQYDQRILYKLKESHARTYNLAQYLHRSGGFPVYKNTKVTYFPNGQSKFEEMKKQLLKAEKFIFLEYFIIAEGLMWGEILSILEQKVQEGVEVRVMYDGMLELSTLSFDYAKRLEKIGIKAKVFSPITPFVSTYYNYRDHRKILVIDNKVAFNGGINLADEYINQIERFGYWKDTAVMLEGEGVASFTLMFLQMWSTTNKDYEFAPYLTQNFHEIVANGYVIPYSDSPLDHEKVGENVYIDILNQARDYVYIMTPYLILDSEMEHALQFAAERGVDVKIIMPGIPDKKVPFALAKRYFPALLDAGVKIYEFTPGFVHAKVFIADDIKAVVGTINLDYRSLYHHFECATYMYQTDCLVDIKADFKETLKQSRRVTRSTLQKEKISTKLIGLVVKLVAPLL</sequence>
<dbReference type="EMBL" id="AE014133">
    <property type="protein sequence ID" value="AAN58689.1"/>
    <property type="molecule type" value="Genomic_DNA"/>
</dbReference>
<dbReference type="EMBL" id="M37842">
    <property type="protein sequence ID" value="AAA88609.1"/>
    <property type="molecule type" value="Genomic_DNA"/>
</dbReference>
<dbReference type="PIR" id="S06993">
    <property type="entry name" value="S06993"/>
</dbReference>
<dbReference type="RefSeq" id="NP_721383.1">
    <property type="nucleotide sequence ID" value="NC_004350.2"/>
</dbReference>
<dbReference type="SMR" id="P34001"/>
<dbReference type="STRING" id="210007.SMU_988"/>
<dbReference type="DNASU" id="1028330"/>
<dbReference type="KEGG" id="smu:SMU_988"/>
<dbReference type="PATRIC" id="fig|210007.7.peg.881"/>
<dbReference type="eggNOG" id="COG1502">
    <property type="taxonomic scope" value="Bacteria"/>
</dbReference>
<dbReference type="HOGENOM" id="CLU_038053_1_2_9"/>
<dbReference type="OrthoDB" id="9762009at2"/>
<dbReference type="PhylomeDB" id="P34001"/>
<dbReference type="Proteomes" id="UP000002512">
    <property type="component" value="Chromosome"/>
</dbReference>
<dbReference type="GO" id="GO:0005886">
    <property type="term" value="C:plasma membrane"/>
    <property type="evidence" value="ECO:0007669"/>
    <property type="project" value="UniProtKB-SubCell"/>
</dbReference>
<dbReference type="GO" id="GO:0008808">
    <property type="term" value="F:cardiolipin synthase activity"/>
    <property type="evidence" value="ECO:0007669"/>
    <property type="project" value="InterPro"/>
</dbReference>
<dbReference type="GO" id="GO:0032049">
    <property type="term" value="P:cardiolipin biosynthetic process"/>
    <property type="evidence" value="ECO:0007669"/>
    <property type="project" value="InterPro"/>
</dbReference>
<dbReference type="CDD" id="cd09154">
    <property type="entry name" value="PLDc_SMU_988_like_1"/>
    <property type="match status" value="1"/>
</dbReference>
<dbReference type="CDD" id="cd09160">
    <property type="entry name" value="PLDc_SMU_988_like_2"/>
    <property type="match status" value="1"/>
</dbReference>
<dbReference type="Gene3D" id="3.30.870.10">
    <property type="entry name" value="Endonuclease Chain A"/>
    <property type="match status" value="2"/>
</dbReference>
<dbReference type="InterPro" id="IPR022924">
    <property type="entry name" value="Cardiolipin_synthase"/>
</dbReference>
<dbReference type="InterPro" id="IPR025202">
    <property type="entry name" value="PLD-like_dom"/>
</dbReference>
<dbReference type="InterPro" id="IPR001736">
    <property type="entry name" value="PLipase_D/transphosphatidylase"/>
</dbReference>
<dbReference type="NCBIfam" id="TIGR04265">
    <property type="entry name" value="bac_cardiolipin"/>
    <property type="match status" value="1"/>
</dbReference>
<dbReference type="PANTHER" id="PTHR21248">
    <property type="entry name" value="CARDIOLIPIN SYNTHASE"/>
    <property type="match status" value="1"/>
</dbReference>
<dbReference type="PANTHER" id="PTHR21248:SF22">
    <property type="entry name" value="PHOSPHOLIPASE D"/>
    <property type="match status" value="1"/>
</dbReference>
<dbReference type="Pfam" id="PF00614">
    <property type="entry name" value="PLDc"/>
    <property type="match status" value="1"/>
</dbReference>
<dbReference type="Pfam" id="PF13091">
    <property type="entry name" value="PLDc_2"/>
    <property type="match status" value="1"/>
</dbReference>
<dbReference type="SMART" id="SM00155">
    <property type="entry name" value="PLDc"/>
    <property type="match status" value="2"/>
</dbReference>
<dbReference type="SUPFAM" id="SSF56024">
    <property type="entry name" value="Phospholipase D/nuclease"/>
    <property type="match status" value="2"/>
</dbReference>
<dbReference type="PROSITE" id="PS50035">
    <property type="entry name" value="PLD"/>
    <property type="match status" value="2"/>
</dbReference>
<evidence type="ECO:0000255" key="1"/>
<evidence type="ECO:0000255" key="2">
    <source>
        <dbReference type="PROSITE-ProRule" id="PRU00153"/>
    </source>
</evidence>
<evidence type="ECO:0000305" key="3"/>
<comment type="subcellular location">
    <subcellularLocation>
        <location evidence="3">Cell membrane</location>
        <topology evidence="3">Multi-pass membrane protein</topology>
    </subcellularLocation>
</comment>
<comment type="similarity">
    <text evidence="3">Belongs to the phospholipase D family. Cardiolipin synthase subfamily.</text>
</comment>
<feature type="chain" id="PRO_0000201282" description="Uncharacterized protein SMU_988">
    <location>
        <begin position="1"/>
        <end position="461"/>
    </location>
</feature>
<feature type="transmembrane region" description="Helical" evidence="1">
    <location>
        <begin position="18"/>
        <end position="38"/>
    </location>
</feature>
<feature type="transmembrane region" description="Helical" evidence="1">
    <location>
        <begin position="124"/>
        <end position="144"/>
    </location>
</feature>
<feature type="domain" description="PLD phosphodiesterase 1" evidence="2">
    <location>
        <begin position="197"/>
        <end position="224"/>
    </location>
</feature>
<feature type="domain" description="PLD phosphodiesterase 2" evidence="2">
    <location>
        <begin position="374"/>
        <end position="401"/>
    </location>
</feature>
<gene>
    <name type="ordered locus">SMU_988</name>
</gene>
<reference key="1">
    <citation type="journal article" date="2002" name="Proc. Natl. Acad. Sci. U.S.A.">
        <title>Genome sequence of Streptococcus mutans UA159, a cariogenic dental pathogen.</title>
        <authorList>
            <person name="Ajdic D.J."/>
            <person name="McShan W.M."/>
            <person name="McLaughlin R.E."/>
            <person name="Savic G."/>
            <person name="Chang J."/>
            <person name="Carson M.B."/>
            <person name="Primeaux C."/>
            <person name="Tian R."/>
            <person name="Kenton S."/>
            <person name="Jia H.G."/>
            <person name="Lin S.P."/>
            <person name="Qian Y."/>
            <person name="Li S."/>
            <person name="Zhu H."/>
            <person name="Najar F.Z."/>
            <person name="Lai H."/>
            <person name="White J."/>
            <person name="Roe B.A."/>
            <person name="Ferretti J.J."/>
        </authorList>
    </citation>
    <scope>NUCLEOTIDE SEQUENCE [LARGE SCALE GENOMIC DNA]</scope>
    <source>
        <strain>ATCC 700610 / UA159</strain>
    </source>
</reference>
<reference key="2">
    <citation type="journal article" date="1989" name="Mol. Microbiol.">
        <title>Sequence analysis of the wall-associated protein precursor of Streptococcus mutans antigen A.</title>
        <authorList>
            <person name="Ferretti J.J."/>
            <person name="Russell R.R.B."/>
            <person name="Dao M.L."/>
        </authorList>
    </citation>
    <scope>NUCLEOTIDE SEQUENCE [GENOMIC DNA] OF 1-373</scope>
</reference>
<keyword id="KW-1003">Cell membrane</keyword>
<keyword id="KW-0472">Membrane</keyword>
<keyword id="KW-1185">Reference proteome</keyword>
<keyword id="KW-0677">Repeat</keyword>
<keyword id="KW-0808">Transferase</keyword>
<keyword id="KW-0812">Transmembrane</keyword>
<keyword id="KW-1133">Transmembrane helix</keyword>
<name>Y988_STRMU</name>